<sequence>MIYEKILLKVLLGPHISEKSSTLSGNFSTVIIKVSICATKLEIKRAVQNMFNVAVKNVNTLVVQGKCKRKKSRITCSSNWKKAYVTLKRGQNINFIGSSE</sequence>
<dbReference type="EMBL" id="AE016826">
    <property type="protein sequence ID" value="AAO27171.1"/>
    <property type="molecule type" value="Genomic_DNA"/>
</dbReference>
<dbReference type="RefSeq" id="WP_011091572.1">
    <property type="nucleotide sequence ID" value="NC_004545.1"/>
</dbReference>
<dbReference type="SMR" id="Q89A70"/>
<dbReference type="STRING" id="224915.bbp_465"/>
<dbReference type="KEGG" id="bab:bbp_465"/>
<dbReference type="eggNOG" id="COG0089">
    <property type="taxonomic scope" value="Bacteria"/>
</dbReference>
<dbReference type="HOGENOM" id="CLU_037562_3_1_6"/>
<dbReference type="OrthoDB" id="9793353at2"/>
<dbReference type="Proteomes" id="UP000000601">
    <property type="component" value="Chromosome"/>
</dbReference>
<dbReference type="GO" id="GO:1990904">
    <property type="term" value="C:ribonucleoprotein complex"/>
    <property type="evidence" value="ECO:0007669"/>
    <property type="project" value="UniProtKB-KW"/>
</dbReference>
<dbReference type="GO" id="GO:0005840">
    <property type="term" value="C:ribosome"/>
    <property type="evidence" value="ECO:0007669"/>
    <property type="project" value="UniProtKB-KW"/>
</dbReference>
<dbReference type="GO" id="GO:0019843">
    <property type="term" value="F:rRNA binding"/>
    <property type="evidence" value="ECO:0007669"/>
    <property type="project" value="UniProtKB-UniRule"/>
</dbReference>
<dbReference type="GO" id="GO:0003735">
    <property type="term" value="F:structural constituent of ribosome"/>
    <property type="evidence" value="ECO:0007669"/>
    <property type="project" value="InterPro"/>
</dbReference>
<dbReference type="GO" id="GO:0006412">
    <property type="term" value="P:translation"/>
    <property type="evidence" value="ECO:0007669"/>
    <property type="project" value="UniProtKB-UniRule"/>
</dbReference>
<dbReference type="FunFam" id="3.30.70.330:FF:000001">
    <property type="entry name" value="50S ribosomal protein L23"/>
    <property type="match status" value="1"/>
</dbReference>
<dbReference type="Gene3D" id="3.30.70.330">
    <property type="match status" value="1"/>
</dbReference>
<dbReference type="HAMAP" id="MF_01369_B">
    <property type="entry name" value="Ribosomal_uL23_B"/>
    <property type="match status" value="1"/>
</dbReference>
<dbReference type="InterPro" id="IPR012677">
    <property type="entry name" value="Nucleotide-bd_a/b_plait_sf"/>
</dbReference>
<dbReference type="InterPro" id="IPR013025">
    <property type="entry name" value="Ribosomal_uL23-like"/>
</dbReference>
<dbReference type="InterPro" id="IPR012678">
    <property type="entry name" value="Ribosomal_uL23/eL15/eS24_sf"/>
</dbReference>
<dbReference type="InterPro" id="IPR001014">
    <property type="entry name" value="Ribosomal_uL23_CS"/>
</dbReference>
<dbReference type="NCBIfam" id="NF004359">
    <property type="entry name" value="PRK05738.1-3"/>
    <property type="match status" value="1"/>
</dbReference>
<dbReference type="NCBIfam" id="NF004363">
    <property type="entry name" value="PRK05738.2-4"/>
    <property type="match status" value="1"/>
</dbReference>
<dbReference type="PANTHER" id="PTHR11620">
    <property type="entry name" value="60S RIBOSOMAL PROTEIN L23A"/>
    <property type="match status" value="1"/>
</dbReference>
<dbReference type="Pfam" id="PF00276">
    <property type="entry name" value="Ribosomal_L23"/>
    <property type="match status" value="1"/>
</dbReference>
<dbReference type="SUPFAM" id="SSF54189">
    <property type="entry name" value="Ribosomal proteins S24e, L23 and L15e"/>
    <property type="match status" value="1"/>
</dbReference>
<dbReference type="PROSITE" id="PS00050">
    <property type="entry name" value="RIBOSOMAL_L23"/>
    <property type="match status" value="1"/>
</dbReference>
<accession>Q89A70</accession>
<feature type="chain" id="PRO_0000129402" description="Large ribosomal subunit protein uL23">
    <location>
        <begin position="1"/>
        <end position="100"/>
    </location>
</feature>
<organism>
    <name type="scientific">Buchnera aphidicola subsp. Baizongia pistaciae (strain Bp)</name>
    <dbReference type="NCBI Taxonomy" id="224915"/>
    <lineage>
        <taxon>Bacteria</taxon>
        <taxon>Pseudomonadati</taxon>
        <taxon>Pseudomonadota</taxon>
        <taxon>Gammaproteobacteria</taxon>
        <taxon>Enterobacterales</taxon>
        <taxon>Erwiniaceae</taxon>
        <taxon>Buchnera</taxon>
    </lineage>
</organism>
<name>RL23_BUCBP</name>
<reference key="1">
    <citation type="journal article" date="2003" name="Proc. Natl. Acad. Sci. U.S.A.">
        <title>Reductive genome evolution in Buchnera aphidicola.</title>
        <authorList>
            <person name="van Ham R.C.H.J."/>
            <person name="Kamerbeek J."/>
            <person name="Palacios C."/>
            <person name="Rausell C."/>
            <person name="Abascal F."/>
            <person name="Bastolla U."/>
            <person name="Fernandez J.M."/>
            <person name="Jimenez L."/>
            <person name="Postigo M."/>
            <person name="Silva F.J."/>
            <person name="Tamames J."/>
            <person name="Viguera E."/>
            <person name="Latorre A."/>
            <person name="Valencia A."/>
            <person name="Moran F."/>
            <person name="Moya A."/>
        </authorList>
    </citation>
    <scope>NUCLEOTIDE SEQUENCE [LARGE SCALE GENOMIC DNA]</scope>
    <source>
        <strain>Bp</strain>
    </source>
</reference>
<keyword id="KW-1185">Reference proteome</keyword>
<keyword id="KW-0687">Ribonucleoprotein</keyword>
<keyword id="KW-0689">Ribosomal protein</keyword>
<keyword id="KW-0694">RNA-binding</keyword>
<keyword id="KW-0699">rRNA-binding</keyword>
<evidence type="ECO:0000255" key="1">
    <source>
        <dbReference type="HAMAP-Rule" id="MF_01369"/>
    </source>
</evidence>
<evidence type="ECO:0000305" key="2"/>
<proteinExistence type="inferred from homology"/>
<comment type="function">
    <text evidence="1">One of the early assembly proteins it binds 23S rRNA. One of the proteins that surrounds the polypeptide exit tunnel on the outside of the ribosome. Forms the main docking site for trigger factor binding to the ribosome.</text>
</comment>
<comment type="subunit">
    <text evidence="1">Part of the 50S ribosomal subunit. Contacts protein L29, and trigger factor when it is bound to the ribosome.</text>
</comment>
<comment type="similarity">
    <text evidence="1">Belongs to the universal ribosomal protein uL23 family.</text>
</comment>
<protein>
    <recommendedName>
        <fullName evidence="1">Large ribosomal subunit protein uL23</fullName>
    </recommendedName>
    <alternativeName>
        <fullName evidence="2">50S ribosomal protein L23</fullName>
    </alternativeName>
</protein>
<gene>
    <name evidence="1" type="primary">rplW</name>
    <name type="ordered locus">bbp_465</name>
</gene>